<feature type="signal peptide" evidence="2">
    <location>
        <begin position="1"/>
        <end position="22"/>
    </location>
</feature>
<feature type="chain" id="PRO_0000387533" description="Probable LRR receptor-like serine/threonine-protein kinase At1g53420">
    <location>
        <begin position="23"/>
        <end position="953"/>
    </location>
</feature>
<feature type="topological domain" description="Extracellular" evidence="2">
    <location>
        <begin position="23"/>
        <end position="566"/>
    </location>
</feature>
<feature type="transmembrane region" description="Helical" evidence="2">
    <location>
        <begin position="567"/>
        <end position="587"/>
    </location>
</feature>
<feature type="topological domain" description="Cytoplasmic" evidence="2">
    <location>
        <begin position="588"/>
        <end position="953"/>
    </location>
</feature>
<feature type="repeat" description="LRR 1">
    <location>
        <begin position="63"/>
        <end position="86"/>
    </location>
</feature>
<feature type="repeat" description="LRR 2">
    <location>
        <begin position="88"/>
        <end position="110"/>
    </location>
</feature>
<feature type="repeat" description="LRR 3">
    <location>
        <begin position="111"/>
        <end position="132"/>
    </location>
</feature>
<feature type="repeat" description="LRR 4">
    <location>
        <begin position="135"/>
        <end position="158"/>
    </location>
</feature>
<feature type="repeat" description="LRR 5">
    <location>
        <begin position="159"/>
        <end position="182"/>
    </location>
</feature>
<feature type="repeat" description="LRR 6">
    <location>
        <begin position="183"/>
        <end position="205"/>
    </location>
</feature>
<feature type="domain" description="Protein kinase" evidence="3">
    <location>
        <begin position="624"/>
        <end position="901"/>
    </location>
</feature>
<feature type="active site" description="Proton acceptor" evidence="3 4">
    <location>
        <position position="750"/>
    </location>
</feature>
<feature type="binding site" evidence="3">
    <location>
        <begin position="630"/>
        <end position="638"/>
    </location>
    <ligand>
        <name>ATP</name>
        <dbReference type="ChEBI" id="CHEBI:30616"/>
    </ligand>
</feature>
<feature type="binding site" evidence="3">
    <location>
        <position position="652"/>
    </location>
    <ligand>
        <name>ATP</name>
        <dbReference type="ChEBI" id="CHEBI:30616"/>
    </ligand>
</feature>
<feature type="modified residue" description="Phosphotyrosine" evidence="1">
    <location>
        <position position="697"/>
    </location>
</feature>
<feature type="modified residue" description="Phosphoserine" evidence="1">
    <location>
        <position position="783"/>
    </location>
</feature>
<feature type="modified residue" description="Phosphothreonine" evidence="1">
    <location>
        <position position="784"/>
    </location>
</feature>
<feature type="modified residue" description="Phosphothreonine" evidence="1">
    <location>
        <position position="789"/>
    </location>
</feature>
<feature type="modified residue" description="Phosphotyrosine" evidence="1">
    <location>
        <position position="797"/>
    </location>
</feature>
<feature type="glycosylation site" description="N-linked (GlcNAc...) asparagine" evidence="2">
    <location>
        <position position="100"/>
    </location>
</feature>
<feature type="glycosylation site" description="N-linked (GlcNAc...) asparagine" evidence="2">
    <location>
        <position position="132"/>
    </location>
</feature>
<feature type="glycosylation site" description="N-linked (GlcNAc...) asparagine" evidence="2">
    <location>
        <position position="265"/>
    </location>
</feature>
<feature type="glycosylation site" description="N-linked (GlcNAc...) asparagine" evidence="2">
    <location>
        <position position="315"/>
    </location>
</feature>
<feature type="glycosylation site" description="N-linked (GlcNAc...) asparagine" evidence="2">
    <location>
        <position position="335"/>
    </location>
</feature>
<feature type="glycosylation site" description="N-linked (GlcNAc...) asparagine" evidence="2">
    <location>
        <position position="378"/>
    </location>
</feature>
<feature type="glycosylation site" description="N-linked (GlcNAc...) asparagine" evidence="2">
    <location>
        <position position="423"/>
    </location>
</feature>
<feature type="splice variant" id="VSP_038280" description="In isoform 2." evidence="5">
    <location>
        <begin position="1"/>
        <end position="255"/>
    </location>
</feature>
<gene>
    <name type="ordered locus">At1g53420</name>
    <name type="ORF">F12M16.30</name>
</gene>
<comment type="catalytic activity">
    <reaction>
        <text>L-seryl-[protein] + ATP = O-phospho-L-seryl-[protein] + ADP + H(+)</text>
        <dbReference type="Rhea" id="RHEA:17989"/>
        <dbReference type="Rhea" id="RHEA-COMP:9863"/>
        <dbReference type="Rhea" id="RHEA-COMP:11604"/>
        <dbReference type="ChEBI" id="CHEBI:15378"/>
        <dbReference type="ChEBI" id="CHEBI:29999"/>
        <dbReference type="ChEBI" id="CHEBI:30616"/>
        <dbReference type="ChEBI" id="CHEBI:83421"/>
        <dbReference type="ChEBI" id="CHEBI:456216"/>
        <dbReference type="EC" id="2.7.11.1"/>
    </reaction>
</comment>
<comment type="catalytic activity">
    <reaction>
        <text>L-threonyl-[protein] + ATP = O-phospho-L-threonyl-[protein] + ADP + H(+)</text>
        <dbReference type="Rhea" id="RHEA:46608"/>
        <dbReference type="Rhea" id="RHEA-COMP:11060"/>
        <dbReference type="Rhea" id="RHEA-COMP:11605"/>
        <dbReference type="ChEBI" id="CHEBI:15378"/>
        <dbReference type="ChEBI" id="CHEBI:30013"/>
        <dbReference type="ChEBI" id="CHEBI:30616"/>
        <dbReference type="ChEBI" id="CHEBI:61977"/>
        <dbReference type="ChEBI" id="CHEBI:456216"/>
        <dbReference type="EC" id="2.7.11.1"/>
    </reaction>
</comment>
<comment type="subcellular location">
    <subcellularLocation>
        <location evidence="6">Membrane</location>
        <topology evidence="6">Single-pass type I membrane protein</topology>
    </subcellularLocation>
</comment>
<comment type="alternative products">
    <event type="alternative splicing"/>
    <isoform>
        <id>C0LGG7-1</id>
        <name>1</name>
        <sequence type="displayed"/>
    </isoform>
    <isoform>
        <id>C0LGG7-2</id>
        <name>2</name>
        <sequence type="described" ref="VSP_038280"/>
    </isoform>
</comment>
<comment type="similarity">
    <text evidence="3">Belongs to the protein kinase superfamily. Ser/Thr protein kinase family.</text>
</comment>
<comment type="sequence caution" evidence="6">
    <conflict type="erroneous gene model prediction">
        <sequence resource="EMBL-CDS" id="AAF69542"/>
    </conflict>
</comment>
<dbReference type="EC" id="2.7.11.1"/>
<dbReference type="EMBL" id="AC008007">
    <property type="protein sequence ID" value="AAF69542.1"/>
    <property type="status" value="ALT_SEQ"/>
    <property type="molecule type" value="Genomic_DNA"/>
</dbReference>
<dbReference type="EMBL" id="CP002684">
    <property type="protein sequence ID" value="AEE32938.1"/>
    <property type="molecule type" value="Genomic_DNA"/>
</dbReference>
<dbReference type="EMBL" id="FJ708656">
    <property type="protein sequence ID" value="ACN59252.1"/>
    <property type="molecule type" value="mRNA"/>
</dbReference>
<dbReference type="PIR" id="A96574">
    <property type="entry name" value="A96574"/>
</dbReference>
<dbReference type="RefSeq" id="NP_175747.2">
    <molecule id="C0LGG7-1"/>
    <property type="nucleotide sequence ID" value="NM_104220.2"/>
</dbReference>
<dbReference type="SMR" id="C0LGG7"/>
<dbReference type="BioGRID" id="27002">
    <property type="interactions" value="11"/>
</dbReference>
<dbReference type="IntAct" id="C0LGG7">
    <property type="interactions" value="11"/>
</dbReference>
<dbReference type="STRING" id="3702.C0LGG7"/>
<dbReference type="GlyGen" id="C0LGG7">
    <property type="glycosylation" value="7 sites"/>
</dbReference>
<dbReference type="PaxDb" id="3702-AT1G53420.1"/>
<dbReference type="ProteomicsDB" id="242475">
    <molecule id="C0LGG7-1"/>
</dbReference>
<dbReference type="EnsemblPlants" id="AT1G53420.1">
    <molecule id="C0LGG7-1"/>
    <property type="protein sequence ID" value="AT1G53420.1"/>
    <property type="gene ID" value="AT1G53420"/>
</dbReference>
<dbReference type="GeneID" id="841777"/>
<dbReference type="Gramene" id="AT1G53420.1">
    <molecule id="C0LGG7-1"/>
    <property type="protein sequence ID" value="AT1G53420.1"/>
    <property type="gene ID" value="AT1G53420"/>
</dbReference>
<dbReference type="KEGG" id="ath:AT1G53420"/>
<dbReference type="Araport" id="AT1G53420"/>
<dbReference type="TAIR" id="AT1G53420"/>
<dbReference type="eggNOG" id="ENOG502QVI9">
    <property type="taxonomic scope" value="Eukaryota"/>
</dbReference>
<dbReference type="HOGENOM" id="CLU_000288_114_2_1"/>
<dbReference type="InParanoid" id="C0LGG7"/>
<dbReference type="OMA" id="GDEMSIN"/>
<dbReference type="PhylomeDB" id="C0LGG7"/>
<dbReference type="PRO" id="PR:C0LGG7"/>
<dbReference type="Proteomes" id="UP000006548">
    <property type="component" value="Chromosome 1"/>
</dbReference>
<dbReference type="ExpressionAtlas" id="C0LGG7">
    <property type="expression patterns" value="baseline and differential"/>
</dbReference>
<dbReference type="GO" id="GO:0016020">
    <property type="term" value="C:membrane"/>
    <property type="evidence" value="ECO:0007669"/>
    <property type="project" value="UniProtKB-SubCell"/>
</dbReference>
<dbReference type="GO" id="GO:0009506">
    <property type="term" value="C:plasmodesma"/>
    <property type="evidence" value="ECO:0007005"/>
    <property type="project" value="TAIR"/>
</dbReference>
<dbReference type="GO" id="GO:0005524">
    <property type="term" value="F:ATP binding"/>
    <property type="evidence" value="ECO:0007669"/>
    <property type="project" value="UniProtKB-KW"/>
</dbReference>
<dbReference type="GO" id="GO:0106310">
    <property type="term" value="F:protein serine kinase activity"/>
    <property type="evidence" value="ECO:0007669"/>
    <property type="project" value="RHEA"/>
</dbReference>
<dbReference type="GO" id="GO:0004674">
    <property type="term" value="F:protein serine/threonine kinase activity"/>
    <property type="evidence" value="ECO:0007669"/>
    <property type="project" value="UniProtKB-KW"/>
</dbReference>
<dbReference type="CDD" id="cd14066">
    <property type="entry name" value="STKc_IRAK"/>
    <property type="match status" value="1"/>
</dbReference>
<dbReference type="FunFam" id="3.80.10.10:FF:001022">
    <property type="entry name" value="Probable LRR receptor-like serine/threonine-protein kinase At1g53420"/>
    <property type="match status" value="1"/>
</dbReference>
<dbReference type="FunFam" id="3.80.10.10:FF:001334">
    <property type="entry name" value="Probable LRR receptor-like serine/threonine-protein kinase At1g53420"/>
    <property type="match status" value="1"/>
</dbReference>
<dbReference type="FunFam" id="3.30.200.20:FF:000217">
    <property type="entry name" value="probable LRR receptor-like serine/threonine-protein kinase At1g53430"/>
    <property type="match status" value="1"/>
</dbReference>
<dbReference type="FunFam" id="2.60.120.430:FF:000004">
    <property type="entry name" value="Putative leucine-rich repeat receptor-like serine/threonine-protein kinase"/>
    <property type="match status" value="1"/>
</dbReference>
<dbReference type="FunFam" id="1.10.510.10:FF:000044">
    <property type="entry name" value="Putative LRR receptor-like serine/threonine-protein kinase"/>
    <property type="match status" value="1"/>
</dbReference>
<dbReference type="Gene3D" id="2.60.120.430">
    <property type="entry name" value="Galactose-binding lectin"/>
    <property type="match status" value="1"/>
</dbReference>
<dbReference type="Gene3D" id="3.30.200.20">
    <property type="entry name" value="Phosphorylase Kinase, domain 1"/>
    <property type="match status" value="1"/>
</dbReference>
<dbReference type="Gene3D" id="3.80.10.10">
    <property type="entry name" value="Ribonuclease Inhibitor"/>
    <property type="match status" value="2"/>
</dbReference>
<dbReference type="Gene3D" id="1.10.510.10">
    <property type="entry name" value="Transferase(Phosphotransferase) domain 1"/>
    <property type="match status" value="1"/>
</dbReference>
<dbReference type="InterPro" id="IPR011009">
    <property type="entry name" value="Kinase-like_dom_sf"/>
</dbReference>
<dbReference type="InterPro" id="IPR001611">
    <property type="entry name" value="Leu-rich_rpt"/>
</dbReference>
<dbReference type="InterPro" id="IPR032675">
    <property type="entry name" value="LRR_dom_sf"/>
</dbReference>
<dbReference type="InterPro" id="IPR051824">
    <property type="entry name" value="LRR_Rcpt-Like_S/T_Kinase"/>
</dbReference>
<dbReference type="InterPro" id="IPR021720">
    <property type="entry name" value="Malectin_dom"/>
</dbReference>
<dbReference type="InterPro" id="IPR000719">
    <property type="entry name" value="Prot_kinase_dom"/>
</dbReference>
<dbReference type="InterPro" id="IPR001245">
    <property type="entry name" value="Ser-Thr/Tyr_kinase_cat_dom"/>
</dbReference>
<dbReference type="InterPro" id="IPR008271">
    <property type="entry name" value="Ser/Thr_kinase_AS"/>
</dbReference>
<dbReference type="PANTHER" id="PTHR48006">
    <property type="entry name" value="LEUCINE-RICH REPEAT-CONTAINING PROTEIN DDB_G0281931-RELATED"/>
    <property type="match status" value="1"/>
</dbReference>
<dbReference type="PANTHER" id="PTHR48006:SF69">
    <property type="entry name" value="PROTEIN KINASE DOMAIN-CONTAINING PROTEIN"/>
    <property type="match status" value="1"/>
</dbReference>
<dbReference type="Pfam" id="PF00560">
    <property type="entry name" value="LRR_1"/>
    <property type="match status" value="3"/>
</dbReference>
<dbReference type="Pfam" id="PF11721">
    <property type="entry name" value="Malectin"/>
    <property type="match status" value="1"/>
</dbReference>
<dbReference type="Pfam" id="PF07714">
    <property type="entry name" value="PK_Tyr_Ser-Thr"/>
    <property type="match status" value="1"/>
</dbReference>
<dbReference type="SMART" id="SM00220">
    <property type="entry name" value="S_TKc"/>
    <property type="match status" value="1"/>
</dbReference>
<dbReference type="SUPFAM" id="SSF52058">
    <property type="entry name" value="L domain-like"/>
    <property type="match status" value="1"/>
</dbReference>
<dbReference type="SUPFAM" id="SSF56112">
    <property type="entry name" value="Protein kinase-like (PK-like)"/>
    <property type="match status" value="1"/>
</dbReference>
<dbReference type="PROSITE" id="PS50011">
    <property type="entry name" value="PROTEIN_KINASE_DOM"/>
    <property type="match status" value="1"/>
</dbReference>
<dbReference type="PROSITE" id="PS00108">
    <property type="entry name" value="PROTEIN_KINASE_ST"/>
    <property type="match status" value="1"/>
</dbReference>
<organism>
    <name type="scientific">Arabidopsis thaliana</name>
    <name type="common">Mouse-ear cress</name>
    <dbReference type="NCBI Taxonomy" id="3702"/>
    <lineage>
        <taxon>Eukaryota</taxon>
        <taxon>Viridiplantae</taxon>
        <taxon>Streptophyta</taxon>
        <taxon>Embryophyta</taxon>
        <taxon>Tracheophyta</taxon>
        <taxon>Spermatophyta</taxon>
        <taxon>Magnoliopsida</taxon>
        <taxon>eudicotyledons</taxon>
        <taxon>Gunneridae</taxon>
        <taxon>Pentapetalae</taxon>
        <taxon>rosids</taxon>
        <taxon>malvids</taxon>
        <taxon>Brassicales</taxon>
        <taxon>Brassicaceae</taxon>
        <taxon>Camelineae</taxon>
        <taxon>Arabidopsis</taxon>
    </lineage>
</organism>
<name>Y1534_ARATH</name>
<keyword id="KW-0025">Alternative splicing</keyword>
<keyword id="KW-0067">ATP-binding</keyword>
<keyword id="KW-0325">Glycoprotein</keyword>
<keyword id="KW-0418">Kinase</keyword>
<keyword id="KW-0433">Leucine-rich repeat</keyword>
<keyword id="KW-0472">Membrane</keyword>
<keyword id="KW-0547">Nucleotide-binding</keyword>
<keyword id="KW-0597">Phosphoprotein</keyword>
<keyword id="KW-0675">Receptor</keyword>
<keyword id="KW-1185">Reference proteome</keyword>
<keyword id="KW-0677">Repeat</keyword>
<keyword id="KW-0723">Serine/threonine-protein kinase</keyword>
<keyword id="KW-0732">Signal</keyword>
<keyword id="KW-0808">Transferase</keyword>
<keyword id="KW-0812">Transmembrane</keyword>
<keyword id="KW-1133">Transmembrane helix</keyword>
<reference key="1">
    <citation type="journal article" date="2000" name="Nature">
        <title>Sequence and analysis of chromosome 1 of the plant Arabidopsis thaliana.</title>
        <authorList>
            <person name="Theologis A."/>
            <person name="Ecker J.R."/>
            <person name="Palm C.J."/>
            <person name="Federspiel N.A."/>
            <person name="Kaul S."/>
            <person name="White O."/>
            <person name="Alonso J."/>
            <person name="Altafi H."/>
            <person name="Araujo R."/>
            <person name="Bowman C.L."/>
            <person name="Brooks S.Y."/>
            <person name="Buehler E."/>
            <person name="Chan A."/>
            <person name="Chao Q."/>
            <person name="Chen H."/>
            <person name="Cheuk R.F."/>
            <person name="Chin C.W."/>
            <person name="Chung M.K."/>
            <person name="Conn L."/>
            <person name="Conway A.B."/>
            <person name="Conway A.R."/>
            <person name="Creasy T.H."/>
            <person name="Dewar K."/>
            <person name="Dunn P."/>
            <person name="Etgu P."/>
            <person name="Feldblyum T.V."/>
            <person name="Feng J.-D."/>
            <person name="Fong B."/>
            <person name="Fujii C.Y."/>
            <person name="Gill J.E."/>
            <person name="Goldsmith A.D."/>
            <person name="Haas B."/>
            <person name="Hansen N.F."/>
            <person name="Hughes B."/>
            <person name="Huizar L."/>
            <person name="Hunter J.L."/>
            <person name="Jenkins J."/>
            <person name="Johnson-Hopson C."/>
            <person name="Khan S."/>
            <person name="Khaykin E."/>
            <person name="Kim C.J."/>
            <person name="Koo H.L."/>
            <person name="Kremenetskaia I."/>
            <person name="Kurtz D.B."/>
            <person name="Kwan A."/>
            <person name="Lam B."/>
            <person name="Langin-Hooper S."/>
            <person name="Lee A."/>
            <person name="Lee J.M."/>
            <person name="Lenz C.A."/>
            <person name="Li J.H."/>
            <person name="Li Y.-P."/>
            <person name="Lin X."/>
            <person name="Liu S.X."/>
            <person name="Liu Z.A."/>
            <person name="Luros J.S."/>
            <person name="Maiti R."/>
            <person name="Marziali A."/>
            <person name="Militscher J."/>
            <person name="Miranda M."/>
            <person name="Nguyen M."/>
            <person name="Nierman W.C."/>
            <person name="Osborne B.I."/>
            <person name="Pai G."/>
            <person name="Peterson J."/>
            <person name="Pham P.K."/>
            <person name="Rizzo M."/>
            <person name="Rooney T."/>
            <person name="Rowley D."/>
            <person name="Sakano H."/>
            <person name="Salzberg S.L."/>
            <person name="Schwartz J.R."/>
            <person name="Shinn P."/>
            <person name="Southwick A.M."/>
            <person name="Sun H."/>
            <person name="Tallon L.J."/>
            <person name="Tambunga G."/>
            <person name="Toriumi M.J."/>
            <person name="Town C.D."/>
            <person name="Utterback T."/>
            <person name="Van Aken S."/>
            <person name="Vaysberg M."/>
            <person name="Vysotskaia V.S."/>
            <person name="Walker M."/>
            <person name="Wu D."/>
            <person name="Yu G."/>
            <person name="Fraser C.M."/>
            <person name="Venter J.C."/>
            <person name="Davis R.W."/>
        </authorList>
    </citation>
    <scope>NUCLEOTIDE SEQUENCE [LARGE SCALE GENOMIC DNA]</scope>
    <source>
        <strain>cv. Columbia</strain>
    </source>
</reference>
<reference key="2">
    <citation type="journal article" date="2017" name="Plant J.">
        <title>Araport11: a complete reannotation of the Arabidopsis thaliana reference genome.</title>
        <authorList>
            <person name="Cheng C.Y."/>
            <person name="Krishnakumar V."/>
            <person name="Chan A.P."/>
            <person name="Thibaud-Nissen F."/>
            <person name="Schobel S."/>
            <person name="Town C.D."/>
        </authorList>
    </citation>
    <scope>GENOME REANNOTATION</scope>
    <source>
        <strain>cv. Columbia</strain>
    </source>
</reference>
<reference key="3">
    <citation type="journal article" date="2010" name="BMC Genomics">
        <title>Genome-wide cloning and sequence analysis of leucine-rich repeat receptor-like protein kinase genes in Arabidopsis thaliana.</title>
        <authorList>
            <person name="Gou X."/>
            <person name="He K."/>
            <person name="Yang H."/>
            <person name="Yuan T."/>
            <person name="Lin H."/>
            <person name="Clouse S.D."/>
            <person name="Li J."/>
        </authorList>
    </citation>
    <scope>NUCLEOTIDE SEQUENCE [LARGE SCALE MRNA] (ISOFORM 2)</scope>
    <source>
        <strain>cv. Columbia</strain>
    </source>
</reference>
<protein>
    <recommendedName>
        <fullName>Probable LRR receptor-like serine/threonine-protein kinase At1g53420</fullName>
        <ecNumber>2.7.11.1</ecNumber>
    </recommendedName>
</protein>
<evidence type="ECO:0000250" key="1">
    <source>
        <dbReference type="UniProtKB" id="O48814"/>
    </source>
</evidence>
<evidence type="ECO:0000255" key="2"/>
<evidence type="ECO:0000255" key="3">
    <source>
        <dbReference type="PROSITE-ProRule" id="PRU00159"/>
    </source>
</evidence>
<evidence type="ECO:0000255" key="4">
    <source>
        <dbReference type="PROSITE-ProRule" id="PRU10027"/>
    </source>
</evidence>
<evidence type="ECO:0000303" key="5">
    <source>
    </source>
</evidence>
<evidence type="ECO:0000305" key="6"/>
<accession>C0LGG7</accession>
<accession>Q9MAG1</accession>
<proteinExistence type="evidence at transcript level"/>
<sequence length="953" mass="107490">MSLNRFLFTSFSFFLFFIVHFASSATLPTQEGEAFKVVLTTLKKTNIDLNVDPCEVSSTGNEWSTISRNLKRENLQGSLPKELVGLPLLQEIDLSRNYLNGSIPPEWGVLPLVNIWLLGNRLTGPIPKEFGNITTLTSLVLEANQLSGELPLELGNLPNIQQMILSSNNFNGEIPSTFAKLTTLRDFRVSDNQLSGTIPDFIQKWTKLERLFIQASGLVGPIPIAIASLVELKDLRISDLNGPESPFPQLRNIKKMETLILRNCNLTGDLPDYLGKITSFKFLDLSFNKLSGAIPNTYINLRDGGYIYFTGNMLNGSVPDWMVNKGYKIDLSYNNFSVDPTNAVCKYNNVLSCMRNYQCPKTFNALHINCGGDEMSINGTIYESDKYDRLESWYESRNGWFSNNVGVFVDDKHVPERVTIESNSSELNVVDFGLYTQARISAISLTYYALCLENGNYNVNLHFAEIMFNGNNNYQSLGRRFFDIYIQRKLEVKDFNIAKEAKDVGNVVIKTFPVEIKDGKLEIRLYWAGRGTTVIPKERVYGPLISAISVDSSVNPSPRNGMSTGTLHTLVVILSIFIVFLVFGTLWKKGYLRSKSQMEKDFKSLELMIASFSLRQIKIATNNFDSANRIGEGGFGPVYKGKLFDGTIIAVKQLSTGSKQGNREFLNEIGMISALHHPNLVKLYGCCVEGGQLLLVYEFVENNSLARALFGPQETQLRLDWPTRRKICIGVARGLAYLHEESRLKIVHRDIKATNVLLDKQLNPKISDFGLAKLDEEDSTHISTRIAGTFGYMAPEYAMRGHLTDKADVYSFGIVALEIVHGRSNKIERSKNNTFYLIDWVEVLREKNNLLELVDPRLGSEYNREEAMTMIQIAIMCTSSEPCERPSMSEVVKMLEGKKMVEVEKLEEASVHRETKRLENMNTMKKYYEMIGQEISTSMSMIMSDRSESSADH</sequence>